<accession>Q039J7</accession>
<protein>
    <recommendedName>
        <fullName evidence="1">UvrABC system protein C</fullName>
        <shortName evidence="1">Protein UvrC</shortName>
    </recommendedName>
    <alternativeName>
        <fullName evidence="1">Excinuclease ABC subunit C</fullName>
    </alternativeName>
</protein>
<name>UVRC_LACP3</name>
<evidence type="ECO:0000255" key="1">
    <source>
        <dbReference type="HAMAP-Rule" id="MF_00203"/>
    </source>
</evidence>
<gene>
    <name evidence="1" type="primary">uvrC</name>
    <name type="ordered locus">LSEI_1346</name>
</gene>
<keyword id="KW-0963">Cytoplasm</keyword>
<keyword id="KW-0227">DNA damage</keyword>
<keyword id="KW-0228">DNA excision</keyword>
<keyword id="KW-0234">DNA repair</keyword>
<keyword id="KW-0267">Excision nuclease</keyword>
<keyword id="KW-1185">Reference proteome</keyword>
<keyword id="KW-0742">SOS response</keyword>
<feature type="chain" id="PRO_1000077796" description="UvrABC system protein C">
    <location>
        <begin position="1"/>
        <end position="602"/>
    </location>
</feature>
<feature type="domain" description="GIY-YIG" evidence="1">
    <location>
        <begin position="15"/>
        <end position="92"/>
    </location>
</feature>
<feature type="domain" description="UVR" evidence="1">
    <location>
        <begin position="197"/>
        <end position="232"/>
    </location>
</feature>
<reference key="1">
    <citation type="journal article" date="2006" name="Proc. Natl. Acad. Sci. U.S.A.">
        <title>Comparative genomics of the lactic acid bacteria.</title>
        <authorList>
            <person name="Makarova K.S."/>
            <person name="Slesarev A."/>
            <person name="Wolf Y.I."/>
            <person name="Sorokin A."/>
            <person name="Mirkin B."/>
            <person name="Koonin E.V."/>
            <person name="Pavlov A."/>
            <person name="Pavlova N."/>
            <person name="Karamychev V."/>
            <person name="Polouchine N."/>
            <person name="Shakhova V."/>
            <person name="Grigoriev I."/>
            <person name="Lou Y."/>
            <person name="Rohksar D."/>
            <person name="Lucas S."/>
            <person name="Huang K."/>
            <person name="Goodstein D.M."/>
            <person name="Hawkins T."/>
            <person name="Plengvidhya V."/>
            <person name="Welker D."/>
            <person name="Hughes J."/>
            <person name="Goh Y."/>
            <person name="Benson A."/>
            <person name="Baldwin K."/>
            <person name="Lee J.-H."/>
            <person name="Diaz-Muniz I."/>
            <person name="Dosti B."/>
            <person name="Smeianov V."/>
            <person name="Wechter W."/>
            <person name="Barabote R."/>
            <person name="Lorca G."/>
            <person name="Altermann E."/>
            <person name="Barrangou R."/>
            <person name="Ganesan B."/>
            <person name="Xie Y."/>
            <person name="Rawsthorne H."/>
            <person name="Tamir D."/>
            <person name="Parker C."/>
            <person name="Breidt F."/>
            <person name="Broadbent J.R."/>
            <person name="Hutkins R."/>
            <person name="O'Sullivan D."/>
            <person name="Steele J."/>
            <person name="Unlu G."/>
            <person name="Saier M.H. Jr."/>
            <person name="Klaenhammer T."/>
            <person name="Richardson P."/>
            <person name="Kozyavkin S."/>
            <person name="Weimer B.C."/>
            <person name="Mills D.A."/>
        </authorList>
    </citation>
    <scope>NUCLEOTIDE SEQUENCE [LARGE SCALE GENOMIC DNA]</scope>
    <source>
        <strain>ATCC 334 / BCRC 17002 / CCUG 31169 / CIP 107868 / KCTC 3260 / NRRL B-441</strain>
    </source>
</reference>
<dbReference type="EMBL" id="CP000423">
    <property type="protein sequence ID" value="ABJ70125.1"/>
    <property type="molecule type" value="Genomic_DNA"/>
</dbReference>
<dbReference type="RefSeq" id="WP_011674479.1">
    <property type="nucleotide sequence ID" value="NC_008526.1"/>
</dbReference>
<dbReference type="RefSeq" id="YP_806567.1">
    <property type="nucleotide sequence ID" value="NC_008526.1"/>
</dbReference>
<dbReference type="SMR" id="Q039J7"/>
<dbReference type="STRING" id="321967.LSEI_1346"/>
<dbReference type="PaxDb" id="321967-LSEI_1346"/>
<dbReference type="KEGG" id="lca:LSEI_1346"/>
<dbReference type="PATRIC" id="fig|321967.11.peg.1324"/>
<dbReference type="HOGENOM" id="CLU_014841_3_2_9"/>
<dbReference type="Proteomes" id="UP000001651">
    <property type="component" value="Chromosome"/>
</dbReference>
<dbReference type="GO" id="GO:0005737">
    <property type="term" value="C:cytoplasm"/>
    <property type="evidence" value="ECO:0007669"/>
    <property type="project" value="UniProtKB-SubCell"/>
</dbReference>
<dbReference type="GO" id="GO:0009380">
    <property type="term" value="C:excinuclease repair complex"/>
    <property type="evidence" value="ECO:0007669"/>
    <property type="project" value="InterPro"/>
</dbReference>
<dbReference type="GO" id="GO:0003677">
    <property type="term" value="F:DNA binding"/>
    <property type="evidence" value="ECO:0007669"/>
    <property type="project" value="UniProtKB-UniRule"/>
</dbReference>
<dbReference type="GO" id="GO:0009381">
    <property type="term" value="F:excinuclease ABC activity"/>
    <property type="evidence" value="ECO:0007669"/>
    <property type="project" value="UniProtKB-UniRule"/>
</dbReference>
<dbReference type="GO" id="GO:0006289">
    <property type="term" value="P:nucleotide-excision repair"/>
    <property type="evidence" value="ECO:0007669"/>
    <property type="project" value="UniProtKB-UniRule"/>
</dbReference>
<dbReference type="GO" id="GO:0009432">
    <property type="term" value="P:SOS response"/>
    <property type="evidence" value="ECO:0007669"/>
    <property type="project" value="UniProtKB-UniRule"/>
</dbReference>
<dbReference type="CDD" id="cd10434">
    <property type="entry name" value="GIY-YIG_UvrC_Cho"/>
    <property type="match status" value="1"/>
</dbReference>
<dbReference type="FunFam" id="3.30.420.340:FF:000002">
    <property type="entry name" value="UvrABC system protein C"/>
    <property type="match status" value="1"/>
</dbReference>
<dbReference type="FunFam" id="3.40.1440.10:FF:000001">
    <property type="entry name" value="UvrABC system protein C"/>
    <property type="match status" value="1"/>
</dbReference>
<dbReference type="Gene3D" id="1.10.150.20">
    <property type="entry name" value="5' to 3' exonuclease, C-terminal subdomain"/>
    <property type="match status" value="1"/>
</dbReference>
<dbReference type="Gene3D" id="3.40.1440.10">
    <property type="entry name" value="GIY-YIG endonuclease"/>
    <property type="match status" value="1"/>
</dbReference>
<dbReference type="Gene3D" id="4.10.860.10">
    <property type="entry name" value="UVR domain"/>
    <property type="match status" value="1"/>
</dbReference>
<dbReference type="Gene3D" id="3.30.420.340">
    <property type="entry name" value="UvrC, RNAse H endonuclease domain"/>
    <property type="match status" value="1"/>
</dbReference>
<dbReference type="HAMAP" id="MF_00203">
    <property type="entry name" value="UvrC"/>
    <property type="match status" value="1"/>
</dbReference>
<dbReference type="InterPro" id="IPR000305">
    <property type="entry name" value="GIY-YIG_endonuc"/>
</dbReference>
<dbReference type="InterPro" id="IPR035901">
    <property type="entry name" value="GIY-YIG_endonuc_sf"/>
</dbReference>
<dbReference type="InterPro" id="IPR047296">
    <property type="entry name" value="GIY-YIG_UvrC_Cho"/>
</dbReference>
<dbReference type="InterPro" id="IPR010994">
    <property type="entry name" value="RuvA_2-like"/>
</dbReference>
<dbReference type="InterPro" id="IPR001943">
    <property type="entry name" value="UVR_dom"/>
</dbReference>
<dbReference type="InterPro" id="IPR036876">
    <property type="entry name" value="UVR_dom_sf"/>
</dbReference>
<dbReference type="InterPro" id="IPR050066">
    <property type="entry name" value="UvrABC_protein_C"/>
</dbReference>
<dbReference type="InterPro" id="IPR004791">
    <property type="entry name" value="UvrC"/>
</dbReference>
<dbReference type="InterPro" id="IPR001162">
    <property type="entry name" value="UvrC_RNase_H_dom"/>
</dbReference>
<dbReference type="InterPro" id="IPR038476">
    <property type="entry name" value="UvrC_RNase_H_dom_sf"/>
</dbReference>
<dbReference type="NCBIfam" id="TIGR00194">
    <property type="entry name" value="uvrC"/>
    <property type="match status" value="1"/>
</dbReference>
<dbReference type="PANTHER" id="PTHR30562:SF1">
    <property type="entry name" value="UVRABC SYSTEM PROTEIN C"/>
    <property type="match status" value="1"/>
</dbReference>
<dbReference type="PANTHER" id="PTHR30562">
    <property type="entry name" value="UVRC/OXIDOREDUCTASE"/>
    <property type="match status" value="1"/>
</dbReference>
<dbReference type="Pfam" id="PF01541">
    <property type="entry name" value="GIY-YIG"/>
    <property type="match status" value="1"/>
</dbReference>
<dbReference type="Pfam" id="PF14520">
    <property type="entry name" value="HHH_5"/>
    <property type="match status" value="1"/>
</dbReference>
<dbReference type="Pfam" id="PF02151">
    <property type="entry name" value="UVR"/>
    <property type="match status" value="1"/>
</dbReference>
<dbReference type="Pfam" id="PF22920">
    <property type="entry name" value="UvrC_RNaseH"/>
    <property type="match status" value="1"/>
</dbReference>
<dbReference type="Pfam" id="PF08459">
    <property type="entry name" value="UvrC_RNaseH_dom"/>
    <property type="match status" value="1"/>
</dbReference>
<dbReference type="SMART" id="SM00465">
    <property type="entry name" value="GIYc"/>
    <property type="match status" value="1"/>
</dbReference>
<dbReference type="SUPFAM" id="SSF46600">
    <property type="entry name" value="C-terminal UvrC-binding domain of UvrB"/>
    <property type="match status" value="1"/>
</dbReference>
<dbReference type="SUPFAM" id="SSF82771">
    <property type="entry name" value="GIY-YIG endonuclease"/>
    <property type="match status" value="1"/>
</dbReference>
<dbReference type="SUPFAM" id="SSF47781">
    <property type="entry name" value="RuvA domain 2-like"/>
    <property type="match status" value="1"/>
</dbReference>
<dbReference type="PROSITE" id="PS50164">
    <property type="entry name" value="GIY_YIG"/>
    <property type="match status" value="1"/>
</dbReference>
<dbReference type="PROSITE" id="PS50151">
    <property type="entry name" value="UVR"/>
    <property type="match status" value="1"/>
</dbReference>
<dbReference type="PROSITE" id="PS50165">
    <property type="entry name" value="UVRC"/>
    <property type="match status" value="1"/>
</dbReference>
<comment type="function">
    <text evidence="1">The UvrABC repair system catalyzes the recognition and processing of DNA lesions. UvrC both incises the 5' and 3' sides of the lesion. The N-terminal half is responsible for the 3' incision and the C-terminal half is responsible for the 5' incision.</text>
</comment>
<comment type="subunit">
    <text evidence="1">Interacts with UvrB in an incision complex.</text>
</comment>
<comment type="subcellular location">
    <subcellularLocation>
        <location evidence="1">Cytoplasm</location>
    </subcellularLocation>
</comment>
<comment type="similarity">
    <text evidence="1">Belongs to the UvrC family.</text>
</comment>
<proteinExistence type="inferred from homology"/>
<sequence length="602" mass="68902">MASAHIEHKLSLLPDLPGSYQMKDINGKIIYVGKAKNLKNRVRSYFKSSHDGKVAAMVSQVADFDFIVTSTDKEAFLLEITLIQKYQPYYNIKLKKGTGYPYIKITHERDPKIEITGTIRKDGGYYFGPYPNVYAAQETMHFIQKVYPLRRCNGYQGRPCLYYHMGQCLGACFRTVPEKEYTDQIERIKRFLNGNVGKAKASLTAKMERAAKNLQFERAAEIRDQLHYIEQTLEKQKIISHDNTTRDLFNFYMDKGWISIQVFFIRQARLMKRESRLFPVVNTAKEEFESFILQFYSRRNNVKPREVLVPAGLDNKVLADILEIPVRTPQRGEKRDLMALAAKNSQIKLEDKFRLMELDNRTTIGAMKELMAALNLPMGHVAEAFDHSHIQGADPVSAMVQFVDGQPAKNNYRKYKLDADKTHNGADEAANTREVIRRRYTRLLKERAPLPDLILMDGGEIEMNAAKDVLENELNLDIPVAGMVKNNKHKTAALLFGNADQLINLDPKSQGFYLLERIQDEVHRFAITFHRQLHAKNSLASRLEGIKGVGPKTRLKLLRKFKTINKIKEAPLEDIQELGISKKVAQALKLSLTAEPTPARRV</sequence>
<organism>
    <name type="scientific">Lacticaseibacillus paracasei (strain ATCC 334 / BCRC 17002 / CCUG 31169 / CIP 107868 / KCTC 3260 / NRRL B-441)</name>
    <name type="common">Lactobacillus paracasei</name>
    <dbReference type="NCBI Taxonomy" id="321967"/>
    <lineage>
        <taxon>Bacteria</taxon>
        <taxon>Bacillati</taxon>
        <taxon>Bacillota</taxon>
        <taxon>Bacilli</taxon>
        <taxon>Lactobacillales</taxon>
        <taxon>Lactobacillaceae</taxon>
        <taxon>Lacticaseibacillus</taxon>
    </lineage>
</organism>